<evidence type="ECO:0000250" key="1"/>
<evidence type="ECO:0000255" key="2"/>
<evidence type="ECO:0000269" key="3">
    <source>
    </source>
</evidence>
<evidence type="ECO:0000305" key="4"/>
<accession>P28971</accession>
<accession>Q6S6T0</accession>
<reference key="1">
    <citation type="journal article" date="1992" name="Virology">
        <title>The DNA sequence of equine herpesvirus-1.</title>
        <authorList>
            <person name="Telford E.A.R."/>
            <person name="Watson M.S."/>
            <person name="McBride K."/>
            <person name="Davison A.J."/>
        </authorList>
    </citation>
    <scope>NUCLEOTIDE SEQUENCE [LARGE SCALE GENOMIC DNA]</scope>
</reference>
<reference key="2">
    <citation type="journal article" date="2006" name="J. Virol.">
        <title>The equine herpesvirus 1 UL20 product interacts with glycoprotein K and promotes egress of mature particles.</title>
        <authorList>
            <person name="Guggemoos S."/>
            <person name="Just F.T."/>
            <person name="Neubauer A."/>
        </authorList>
    </citation>
    <scope>FUNCTION</scope>
    <scope>INTERACTION WITH GK</scope>
</reference>
<name>UL20_EHV1B</name>
<dbReference type="EMBL" id="AY665713">
    <property type="protein sequence ID" value="AAT67299.1"/>
    <property type="molecule type" value="Genomic_DNA"/>
</dbReference>
<dbReference type="PIR" id="G36799">
    <property type="entry name" value="WZBED5"/>
</dbReference>
<dbReference type="KEGG" id="vg:1487525"/>
<dbReference type="Proteomes" id="UP000001189">
    <property type="component" value="Segment"/>
</dbReference>
<dbReference type="GO" id="GO:0044175">
    <property type="term" value="C:host cell endosome membrane"/>
    <property type="evidence" value="ECO:0007669"/>
    <property type="project" value="UniProtKB-SubCell"/>
</dbReference>
<dbReference type="GO" id="GO:0044178">
    <property type="term" value="C:host cell Golgi membrane"/>
    <property type="evidence" value="ECO:0007669"/>
    <property type="project" value="UniProtKB-SubCell"/>
</dbReference>
<dbReference type="GO" id="GO:0044200">
    <property type="term" value="C:host cell nuclear membrane"/>
    <property type="evidence" value="ECO:0007669"/>
    <property type="project" value="UniProtKB-SubCell"/>
</dbReference>
<dbReference type="GO" id="GO:0020002">
    <property type="term" value="C:host cell plasma membrane"/>
    <property type="evidence" value="ECO:0007669"/>
    <property type="project" value="UniProtKB-SubCell"/>
</dbReference>
<dbReference type="GO" id="GO:0016020">
    <property type="term" value="C:membrane"/>
    <property type="evidence" value="ECO:0007669"/>
    <property type="project" value="UniProtKB-KW"/>
</dbReference>
<dbReference type="GO" id="GO:0044423">
    <property type="term" value="C:virion component"/>
    <property type="evidence" value="ECO:0007669"/>
    <property type="project" value="UniProtKB-KW"/>
</dbReference>
<dbReference type="GO" id="GO:0019058">
    <property type="term" value="P:viral life cycle"/>
    <property type="evidence" value="ECO:0007669"/>
    <property type="project" value="InterPro"/>
</dbReference>
<dbReference type="InterPro" id="IPR007629">
    <property type="entry name" value="Herpes_UL20"/>
</dbReference>
<dbReference type="Pfam" id="PF04544">
    <property type="entry name" value="Herpes_UL20"/>
    <property type="match status" value="1"/>
</dbReference>
<feature type="chain" id="PRO_0000115967" description="Protein UL20 homolog">
    <location>
        <begin position="1"/>
        <end position="239"/>
    </location>
</feature>
<feature type="transmembrane region" description="Helical" evidence="2">
    <location>
        <begin position="65"/>
        <end position="81"/>
    </location>
</feature>
<feature type="transmembrane region" description="Helical" evidence="2">
    <location>
        <begin position="140"/>
        <end position="156"/>
    </location>
</feature>
<feature type="transmembrane region" description="Helical" evidence="2">
    <location>
        <begin position="189"/>
        <end position="208"/>
    </location>
</feature>
<proteinExistence type="evidence at protein level"/>
<protein>
    <recommendedName>
        <fullName>Protein UL20 homolog</fullName>
    </recommendedName>
</protein>
<sequence length="239" mass="26535">MPQVLMGNTRLHAPLEDGIPLIENDENSSQNEVDLYDYVSMSSYGGDNDFLISSAGGNITPENRPSFSAHVVLFAISALVIKPVCCFIFLNHYVITGSYDFAVAGGVCTVLYYMRLALTAWFMFRNIQSDMLPLNVWQQFVIGCMALGRTVAFMVVSYTTLFIRSELFFSMLAPNAGREYITPIIAHKLMPLISVRSAVCLVIISTAVYAADAICDTIGFTLPRMWMCILMRSSSVKRS</sequence>
<keyword id="KW-1032">Host cell membrane</keyword>
<keyword id="KW-1039">Host endosome</keyword>
<keyword id="KW-1040">Host Golgi apparatus</keyword>
<keyword id="KW-1043">Host membrane</keyword>
<keyword id="KW-1048">Host nucleus</keyword>
<keyword id="KW-0472">Membrane</keyword>
<keyword id="KW-1185">Reference proteome</keyword>
<keyword id="KW-0812">Transmembrane</keyword>
<keyword id="KW-1133">Transmembrane helix</keyword>
<keyword id="KW-0946">Virion</keyword>
<organismHost>
    <name type="scientific">Equus caballus</name>
    <name type="common">Horse</name>
    <dbReference type="NCBI Taxonomy" id="9796"/>
</organismHost>
<comment type="function">
    <text evidence="1 3">Plays an essential role in egress of virus particles from the nucleus, cytoplasmic envelopment and virus-induced cell fusion. Forms a functional protein complex with gK and this interaction is absolutely essential for their coordinate intracellular transport, gK glycosylation, expression on host cell surface, and function. Together, they modulate gB-mediated virus-induced cell fusion and virion egress and therefore actively participate in these processes (By similarity).</text>
</comment>
<comment type="subunit">
    <text evidence="1">Interacts with gK (via N-terminus); this interaction plays a role in the coordinate transport of UL20 and gK to the trans-Golgi network (TGN), and is required for their cell surface expression. Interacts with gB (By similarity).</text>
</comment>
<comment type="subcellular location">
    <subcellularLocation>
        <location evidence="1">Virion</location>
    </subcellularLocation>
    <subcellularLocation>
        <location evidence="1">Host cell membrane</location>
        <topology evidence="1">Multi-pass membrane protein</topology>
    </subcellularLocation>
    <subcellularLocation>
        <location evidence="1">Host endosome membrane</location>
        <topology evidence="1">Multi-pass membrane protein</topology>
    </subcellularLocation>
    <subcellularLocation>
        <location evidence="1">Host Golgi apparatus membrane</location>
        <topology evidence="1">Multi-pass membrane protein</topology>
    </subcellularLocation>
    <subcellularLocation>
        <location evidence="1">Host nucleus membrane</location>
        <topology evidence="1">Multi-pass membrane protein</topology>
    </subcellularLocation>
    <text evidence="1">During virion morphogenesis, this protein probably accumulates in the endosomes and trans-Golgi where secondary envelopment occurs. It is probably transported with gK to the cell surface from where it is endocytosed and directed to the trans-Golgi network (TGN) (By similarity).</text>
</comment>
<comment type="similarity">
    <text evidence="4">Belongs to the alphaherpesvirinae UL20 family.</text>
</comment>
<gene>
    <name type="ordered locus">41</name>
</gene>
<organism>
    <name type="scientific">Equine herpesvirus 1 (strain Ab4p)</name>
    <name type="common">EHV-1</name>
    <name type="synonym">Equine abortion virus</name>
    <dbReference type="NCBI Taxonomy" id="31520"/>
    <lineage>
        <taxon>Viruses</taxon>
        <taxon>Duplodnaviria</taxon>
        <taxon>Heunggongvirae</taxon>
        <taxon>Peploviricota</taxon>
        <taxon>Herviviricetes</taxon>
        <taxon>Herpesvirales</taxon>
        <taxon>Orthoherpesviridae</taxon>
        <taxon>Alphaherpesvirinae</taxon>
        <taxon>Varicellovirus</taxon>
        <taxon>Varicellovirus equidalpha1</taxon>
        <taxon>Equid alphaherpesvirus 1</taxon>
    </lineage>
</organism>